<feature type="chain" id="PRO_0000064473" description="Protein AF1q">
    <location>
        <begin position="1"/>
        <end position="90"/>
    </location>
</feature>
<feature type="short sequence motif" description="Nuclear export signal" evidence="2">
    <location>
        <begin position="24"/>
        <end position="32"/>
    </location>
</feature>
<feature type="modified residue" description="Phosphoserine" evidence="1">
    <location>
        <position position="84"/>
    </location>
</feature>
<gene>
    <name type="primary">MLLT11</name>
    <name type="synonym">AF1Q</name>
</gene>
<proteinExistence type="inferred from homology"/>
<reference key="1">
    <citation type="submission" date="2004-11" db="EMBL/GenBank/DDBJ databases">
        <authorList>
            <consortium name="The German cDNA consortium"/>
        </authorList>
    </citation>
    <scope>NUCLEOTIDE SEQUENCE [LARGE SCALE MRNA]</scope>
    <source>
        <tissue>Brain cortex</tissue>
    </source>
</reference>
<keyword id="KW-0963">Cytoplasm</keyword>
<keyword id="KW-0206">Cytoskeleton</keyword>
<keyword id="KW-0539">Nucleus</keyword>
<keyword id="KW-0597">Phosphoprotein</keyword>
<keyword id="KW-1185">Reference proteome</keyword>
<keyword id="KW-0832">Ubl conjugation</keyword>
<dbReference type="EMBL" id="CR861129">
    <property type="protein sequence ID" value="CAH93204.1"/>
    <property type="molecule type" value="mRNA"/>
</dbReference>
<dbReference type="RefSeq" id="NP_001126885.1">
    <property type="nucleotide sequence ID" value="NM_001133413.1"/>
</dbReference>
<dbReference type="SMR" id="Q5R4W2"/>
<dbReference type="FunCoup" id="Q5R4W2">
    <property type="interactions" value="864"/>
</dbReference>
<dbReference type="GeneID" id="100173899"/>
<dbReference type="KEGG" id="pon:100173899"/>
<dbReference type="CTD" id="10962"/>
<dbReference type="InParanoid" id="Q5R4W2"/>
<dbReference type="OrthoDB" id="9991950at2759"/>
<dbReference type="Proteomes" id="UP000001595">
    <property type="component" value="Unplaced"/>
</dbReference>
<dbReference type="GO" id="GO:0005813">
    <property type="term" value="C:centrosome"/>
    <property type="evidence" value="ECO:0007669"/>
    <property type="project" value="UniProtKB-SubCell"/>
</dbReference>
<dbReference type="GO" id="GO:0005829">
    <property type="term" value="C:cytosol"/>
    <property type="evidence" value="ECO:0007669"/>
    <property type="project" value="TreeGrafter"/>
</dbReference>
<dbReference type="GO" id="GO:0005654">
    <property type="term" value="C:nucleoplasm"/>
    <property type="evidence" value="ECO:0007669"/>
    <property type="project" value="TreeGrafter"/>
</dbReference>
<dbReference type="GO" id="GO:0097191">
    <property type="term" value="P:extrinsic apoptotic signaling pathway"/>
    <property type="evidence" value="ECO:0000250"/>
    <property type="project" value="UniProtKB"/>
</dbReference>
<dbReference type="GO" id="GO:0097193">
    <property type="term" value="P:intrinsic apoptotic signaling pathway"/>
    <property type="evidence" value="ECO:0000250"/>
    <property type="project" value="UniProtKB"/>
</dbReference>
<dbReference type="GO" id="GO:0043065">
    <property type="term" value="P:positive regulation of apoptotic process"/>
    <property type="evidence" value="ECO:0000250"/>
    <property type="project" value="UniProtKB"/>
</dbReference>
<dbReference type="GO" id="GO:0045893">
    <property type="term" value="P:positive regulation of DNA-templated transcription"/>
    <property type="evidence" value="ECO:0000250"/>
    <property type="project" value="UniProtKB"/>
</dbReference>
<dbReference type="GO" id="GO:0051901">
    <property type="term" value="P:positive regulation of mitochondrial depolarization"/>
    <property type="evidence" value="ECO:0000250"/>
    <property type="project" value="UniProtKB"/>
</dbReference>
<dbReference type="GO" id="GO:0090200">
    <property type="term" value="P:positive regulation of release of cytochrome c from mitochondria"/>
    <property type="evidence" value="ECO:0000250"/>
    <property type="project" value="UniProtKB"/>
</dbReference>
<dbReference type="InterPro" id="IPR026778">
    <property type="entry name" value="MLLT11_fam"/>
</dbReference>
<dbReference type="InterPro" id="IPR033461">
    <property type="entry name" value="WRNPLPNID"/>
</dbReference>
<dbReference type="PANTHER" id="PTHR15404">
    <property type="entry name" value="PROTEIN AF1Q"/>
    <property type="match status" value="1"/>
</dbReference>
<dbReference type="PANTHER" id="PTHR15404:SF2">
    <property type="entry name" value="PROTEIN AF1Q"/>
    <property type="match status" value="1"/>
</dbReference>
<dbReference type="Pfam" id="PF15017">
    <property type="entry name" value="WRNPLPNID"/>
    <property type="match status" value="1"/>
</dbReference>
<evidence type="ECO:0000250" key="1">
    <source>
        <dbReference type="UniProtKB" id="P97783"/>
    </source>
</evidence>
<evidence type="ECO:0000250" key="2">
    <source>
        <dbReference type="UniProtKB" id="Q13015"/>
    </source>
</evidence>
<evidence type="ECO:0000305" key="3"/>
<protein>
    <recommendedName>
        <fullName>Protein AF1q</fullName>
    </recommendedName>
</protein>
<organism>
    <name type="scientific">Pongo abelii</name>
    <name type="common">Sumatran orangutan</name>
    <name type="synonym">Pongo pygmaeus abelii</name>
    <dbReference type="NCBI Taxonomy" id="9601"/>
    <lineage>
        <taxon>Eukaryota</taxon>
        <taxon>Metazoa</taxon>
        <taxon>Chordata</taxon>
        <taxon>Craniata</taxon>
        <taxon>Vertebrata</taxon>
        <taxon>Euteleostomi</taxon>
        <taxon>Mammalia</taxon>
        <taxon>Eutheria</taxon>
        <taxon>Euarchontoglires</taxon>
        <taxon>Primates</taxon>
        <taxon>Haplorrhini</taxon>
        <taxon>Catarrhini</taxon>
        <taxon>Hominidae</taxon>
        <taxon>Pongo</taxon>
    </lineage>
</organism>
<sequence length="90" mass="10075">MRDPVSSQYSSFLFWRMPIPELDLSELEGLGLSDTATYKIKDSSVGKMIGQATAADQEKNPEGDGLLEYSTFNFWRAPIASIHSFELDLL</sequence>
<accession>Q5R4W2</accession>
<name>AF1Q_PONAB</name>
<comment type="function">
    <text evidence="1 2">Cofactor for the transcription factor TCF7. Involved in regulation of lymphoid development by driving multipotent hematopoietic progenitor cells towards a T-cell fate.</text>
</comment>
<comment type="subunit">
    <text evidence="2">Interacts with HSPA8 and LAMP2 isoform A; the interaction may target MLLT11 for degradation via chaperone-mediated autophagy. Interacts with TCF7.</text>
</comment>
<comment type="subcellular location">
    <subcellularLocation>
        <location evidence="2">Nucleus</location>
    </subcellularLocation>
    <subcellularLocation>
        <location evidence="2">Cytoplasm</location>
    </subcellularLocation>
    <subcellularLocation>
        <location evidence="2">Cytoplasm</location>
        <location evidence="2">Cytoskeleton</location>
        <location evidence="2">Microtubule organizing center</location>
        <location evidence="2">Centrosome</location>
    </subcellularLocation>
    <text evidence="2">Continuous nuclear export is followed by degradation.</text>
</comment>
<comment type="PTM">
    <text evidence="2">Ubiquitinated, leading to degradation.</text>
</comment>
<comment type="similarity">
    <text evidence="3">Belongs to the MLLT11 family.</text>
</comment>